<accession>Q98QS1</accession>
<gene>
    <name type="primary">rplJ</name>
    <name type="ordered locus">MYPU_2900</name>
</gene>
<comment type="function">
    <text evidence="1">Forms part of the ribosomal stalk, playing a central role in the interaction of the ribosome with GTP-bound translation factors.</text>
</comment>
<comment type="subunit">
    <text evidence="1">Part of the ribosomal stalk of the 50S ribosomal subunit. The N-terminus interacts with L11 and the large rRNA to form the base of the stalk. The C-terminus forms an elongated spine to which L12 dimers bind in a sequential fashion forming a multimeric L10(L12)X complex (By similarity).</text>
</comment>
<comment type="similarity">
    <text evidence="2">Belongs to the universal ribosomal protein uL10 family.</text>
</comment>
<comment type="sequence caution" evidence="2">
    <conflict type="erroneous initiation">
        <sequence resource="EMBL-CDS" id="CAC13463"/>
    </conflict>
</comment>
<evidence type="ECO:0000250" key="1"/>
<evidence type="ECO:0000305" key="2"/>
<feature type="chain" id="PRO_0000154673" description="Large ribosomal subunit protein uL10">
    <location>
        <begin position="1"/>
        <end position="168"/>
    </location>
</feature>
<protein>
    <recommendedName>
        <fullName evidence="2">Large ribosomal subunit protein uL10</fullName>
    </recommendedName>
    <alternativeName>
        <fullName>50S ribosomal protein L10</fullName>
    </alternativeName>
</protein>
<name>RL10_MYCPU</name>
<sequence>MHIESKNRQIKKDIVVEITKKINDSQSLFLAEYRGLTVAKLLNLRKEAKKHNVEIKVYKNRLVKLATQKLGHSDLDKFLVGPNLFVFSNELGMDGAKVLAEFAKKNKKLVLKAGIFDGKVVDAAGVKAVAELPTYEEALTILASSLLGPLRQISLSFKLLVDENKLSN</sequence>
<organism>
    <name type="scientific">Mycoplasmopsis pulmonis (strain UAB CTIP)</name>
    <name type="common">Mycoplasma pulmonis</name>
    <dbReference type="NCBI Taxonomy" id="272635"/>
    <lineage>
        <taxon>Bacteria</taxon>
        <taxon>Bacillati</taxon>
        <taxon>Mycoplasmatota</taxon>
        <taxon>Mycoplasmoidales</taxon>
        <taxon>Metamycoplasmataceae</taxon>
        <taxon>Mycoplasmopsis</taxon>
    </lineage>
</organism>
<dbReference type="EMBL" id="AL445564">
    <property type="protein sequence ID" value="CAC13463.1"/>
    <property type="status" value="ALT_INIT"/>
    <property type="molecule type" value="Genomic_DNA"/>
</dbReference>
<dbReference type="PIR" id="B90548">
    <property type="entry name" value="B90548"/>
</dbReference>
<dbReference type="RefSeq" id="WP_041364021.1">
    <property type="nucleotide sequence ID" value="NC_002771.1"/>
</dbReference>
<dbReference type="SMR" id="Q98QS1"/>
<dbReference type="STRING" id="272635.gene:17576880"/>
<dbReference type="KEGG" id="mpu:MYPU_2900"/>
<dbReference type="eggNOG" id="COG0244">
    <property type="taxonomic scope" value="Bacteria"/>
</dbReference>
<dbReference type="HOGENOM" id="CLU_092227_2_0_14"/>
<dbReference type="BioCyc" id="MPUL272635:G1GT6-291-MONOMER"/>
<dbReference type="Proteomes" id="UP000000528">
    <property type="component" value="Chromosome"/>
</dbReference>
<dbReference type="GO" id="GO:0015934">
    <property type="term" value="C:large ribosomal subunit"/>
    <property type="evidence" value="ECO:0007669"/>
    <property type="project" value="InterPro"/>
</dbReference>
<dbReference type="GO" id="GO:0070180">
    <property type="term" value="F:large ribosomal subunit rRNA binding"/>
    <property type="evidence" value="ECO:0007669"/>
    <property type="project" value="UniProtKB-UniRule"/>
</dbReference>
<dbReference type="GO" id="GO:0003735">
    <property type="term" value="F:structural constituent of ribosome"/>
    <property type="evidence" value="ECO:0007669"/>
    <property type="project" value="InterPro"/>
</dbReference>
<dbReference type="GO" id="GO:0006412">
    <property type="term" value="P:translation"/>
    <property type="evidence" value="ECO:0007669"/>
    <property type="project" value="UniProtKB-UniRule"/>
</dbReference>
<dbReference type="CDD" id="cd05797">
    <property type="entry name" value="Ribosomal_L10"/>
    <property type="match status" value="1"/>
</dbReference>
<dbReference type="Gene3D" id="3.30.70.1730">
    <property type="match status" value="1"/>
</dbReference>
<dbReference type="HAMAP" id="MF_00362">
    <property type="entry name" value="Ribosomal_uL10"/>
    <property type="match status" value="1"/>
</dbReference>
<dbReference type="InterPro" id="IPR001790">
    <property type="entry name" value="Ribosomal_uL10"/>
</dbReference>
<dbReference type="InterPro" id="IPR043141">
    <property type="entry name" value="Ribosomal_uL10-like_sf"/>
</dbReference>
<dbReference type="InterPro" id="IPR022973">
    <property type="entry name" value="Ribosomal_uL10_bac"/>
</dbReference>
<dbReference type="InterPro" id="IPR047865">
    <property type="entry name" value="Ribosomal_uL10_bac_type"/>
</dbReference>
<dbReference type="InterPro" id="IPR002363">
    <property type="entry name" value="Ribosomal_uL10_CS_bac"/>
</dbReference>
<dbReference type="NCBIfam" id="NF000955">
    <property type="entry name" value="PRK00099.1-1"/>
    <property type="match status" value="1"/>
</dbReference>
<dbReference type="PANTHER" id="PTHR11560">
    <property type="entry name" value="39S RIBOSOMAL PROTEIN L10, MITOCHONDRIAL"/>
    <property type="match status" value="1"/>
</dbReference>
<dbReference type="Pfam" id="PF00466">
    <property type="entry name" value="Ribosomal_L10"/>
    <property type="match status" value="1"/>
</dbReference>
<dbReference type="SUPFAM" id="SSF160369">
    <property type="entry name" value="Ribosomal protein L10-like"/>
    <property type="match status" value="1"/>
</dbReference>
<dbReference type="PROSITE" id="PS01109">
    <property type="entry name" value="RIBOSOMAL_L10"/>
    <property type="match status" value="1"/>
</dbReference>
<keyword id="KW-1185">Reference proteome</keyword>
<keyword id="KW-0687">Ribonucleoprotein</keyword>
<keyword id="KW-0689">Ribosomal protein</keyword>
<keyword id="KW-0694">RNA-binding</keyword>
<keyword id="KW-0699">rRNA-binding</keyword>
<proteinExistence type="inferred from homology"/>
<reference key="1">
    <citation type="journal article" date="2001" name="Nucleic Acids Res.">
        <title>The complete genome sequence of the murine respiratory pathogen Mycoplasma pulmonis.</title>
        <authorList>
            <person name="Chambaud I."/>
            <person name="Heilig R."/>
            <person name="Ferris S."/>
            <person name="Barbe V."/>
            <person name="Samson D."/>
            <person name="Galisson F."/>
            <person name="Moszer I."/>
            <person name="Dybvig K."/>
            <person name="Wroblewski H."/>
            <person name="Viari A."/>
            <person name="Rocha E.P.C."/>
            <person name="Blanchard A."/>
        </authorList>
    </citation>
    <scope>NUCLEOTIDE SEQUENCE [LARGE SCALE GENOMIC DNA]</scope>
    <source>
        <strain>UAB CTIP</strain>
    </source>
</reference>